<dbReference type="EC" id="6.1.1.7" evidence="1"/>
<dbReference type="EMBL" id="AE016826">
    <property type="protein sequence ID" value="AAO27083.1"/>
    <property type="molecule type" value="Genomic_DNA"/>
</dbReference>
<dbReference type="RefSeq" id="WP_011091484.1">
    <property type="nucleotide sequence ID" value="NC_004545.1"/>
</dbReference>
<dbReference type="SMR" id="P59420"/>
<dbReference type="STRING" id="224915.bbp_364"/>
<dbReference type="KEGG" id="bab:bbp_364"/>
<dbReference type="eggNOG" id="COG0013">
    <property type="taxonomic scope" value="Bacteria"/>
</dbReference>
<dbReference type="HOGENOM" id="CLU_004485_1_1_6"/>
<dbReference type="OrthoDB" id="9803884at2"/>
<dbReference type="Proteomes" id="UP000000601">
    <property type="component" value="Chromosome"/>
</dbReference>
<dbReference type="GO" id="GO:0005829">
    <property type="term" value="C:cytosol"/>
    <property type="evidence" value="ECO:0007669"/>
    <property type="project" value="TreeGrafter"/>
</dbReference>
<dbReference type="GO" id="GO:0004813">
    <property type="term" value="F:alanine-tRNA ligase activity"/>
    <property type="evidence" value="ECO:0007669"/>
    <property type="project" value="UniProtKB-UniRule"/>
</dbReference>
<dbReference type="GO" id="GO:0002161">
    <property type="term" value="F:aminoacyl-tRNA deacylase activity"/>
    <property type="evidence" value="ECO:0007669"/>
    <property type="project" value="TreeGrafter"/>
</dbReference>
<dbReference type="GO" id="GO:0005524">
    <property type="term" value="F:ATP binding"/>
    <property type="evidence" value="ECO:0007669"/>
    <property type="project" value="UniProtKB-UniRule"/>
</dbReference>
<dbReference type="GO" id="GO:0000049">
    <property type="term" value="F:tRNA binding"/>
    <property type="evidence" value="ECO:0007669"/>
    <property type="project" value="UniProtKB-KW"/>
</dbReference>
<dbReference type="GO" id="GO:0008270">
    <property type="term" value="F:zinc ion binding"/>
    <property type="evidence" value="ECO:0007669"/>
    <property type="project" value="UniProtKB-UniRule"/>
</dbReference>
<dbReference type="GO" id="GO:0006419">
    <property type="term" value="P:alanyl-tRNA aminoacylation"/>
    <property type="evidence" value="ECO:0007669"/>
    <property type="project" value="UniProtKB-UniRule"/>
</dbReference>
<dbReference type="GO" id="GO:0045892">
    <property type="term" value="P:negative regulation of DNA-templated transcription"/>
    <property type="evidence" value="ECO:0007669"/>
    <property type="project" value="TreeGrafter"/>
</dbReference>
<dbReference type="CDD" id="cd00673">
    <property type="entry name" value="AlaRS_core"/>
    <property type="match status" value="1"/>
</dbReference>
<dbReference type="FunFam" id="3.10.310.40:FF:000001">
    <property type="entry name" value="Alanine--tRNA ligase"/>
    <property type="match status" value="1"/>
</dbReference>
<dbReference type="FunFam" id="3.30.930.10:FF:000004">
    <property type="entry name" value="Alanine--tRNA ligase"/>
    <property type="match status" value="1"/>
</dbReference>
<dbReference type="FunFam" id="3.30.980.10:FF:000004">
    <property type="entry name" value="Alanine--tRNA ligase, cytoplasmic"/>
    <property type="match status" value="1"/>
</dbReference>
<dbReference type="Gene3D" id="2.40.30.130">
    <property type="match status" value="1"/>
</dbReference>
<dbReference type="Gene3D" id="3.10.310.40">
    <property type="match status" value="1"/>
</dbReference>
<dbReference type="Gene3D" id="3.30.54.20">
    <property type="match status" value="1"/>
</dbReference>
<dbReference type="Gene3D" id="3.30.930.10">
    <property type="entry name" value="Bira Bifunctional Protein, Domain 2"/>
    <property type="match status" value="1"/>
</dbReference>
<dbReference type="Gene3D" id="3.30.980.10">
    <property type="entry name" value="Threonyl-trna Synthetase, Chain A, domain 2"/>
    <property type="match status" value="1"/>
</dbReference>
<dbReference type="HAMAP" id="MF_00036_B">
    <property type="entry name" value="Ala_tRNA_synth_B"/>
    <property type="match status" value="1"/>
</dbReference>
<dbReference type="InterPro" id="IPR045864">
    <property type="entry name" value="aa-tRNA-synth_II/BPL/LPL"/>
</dbReference>
<dbReference type="InterPro" id="IPR002318">
    <property type="entry name" value="Ala-tRNA-lgiase_IIc"/>
</dbReference>
<dbReference type="InterPro" id="IPR018162">
    <property type="entry name" value="Ala-tRNA-ligase_IIc_anticod-bd"/>
</dbReference>
<dbReference type="InterPro" id="IPR018165">
    <property type="entry name" value="Ala-tRNA-synth_IIc_core"/>
</dbReference>
<dbReference type="InterPro" id="IPR018164">
    <property type="entry name" value="Ala-tRNA-synth_IIc_N"/>
</dbReference>
<dbReference type="InterPro" id="IPR050058">
    <property type="entry name" value="Ala-tRNA_ligase"/>
</dbReference>
<dbReference type="InterPro" id="IPR023033">
    <property type="entry name" value="Ala_tRNA_ligase_euk/bac"/>
</dbReference>
<dbReference type="InterPro" id="IPR003156">
    <property type="entry name" value="DHHA1_dom"/>
</dbReference>
<dbReference type="InterPro" id="IPR018163">
    <property type="entry name" value="Thr/Ala-tRNA-synth_IIc_edit"/>
</dbReference>
<dbReference type="InterPro" id="IPR009000">
    <property type="entry name" value="Transl_B-barrel_sf"/>
</dbReference>
<dbReference type="InterPro" id="IPR012947">
    <property type="entry name" value="tRNA_SAD"/>
</dbReference>
<dbReference type="NCBIfam" id="TIGR00344">
    <property type="entry name" value="alaS"/>
    <property type="match status" value="1"/>
</dbReference>
<dbReference type="PANTHER" id="PTHR11777:SF9">
    <property type="entry name" value="ALANINE--TRNA LIGASE, CYTOPLASMIC"/>
    <property type="match status" value="1"/>
</dbReference>
<dbReference type="PANTHER" id="PTHR11777">
    <property type="entry name" value="ALANYL-TRNA SYNTHETASE"/>
    <property type="match status" value="1"/>
</dbReference>
<dbReference type="Pfam" id="PF02272">
    <property type="entry name" value="DHHA1"/>
    <property type="match status" value="1"/>
</dbReference>
<dbReference type="Pfam" id="PF01411">
    <property type="entry name" value="tRNA-synt_2c"/>
    <property type="match status" value="1"/>
</dbReference>
<dbReference type="Pfam" id="PF07973">
    <property type="entry name" value="tRNA_SAD"/>
    <property type="match status" value="1"/>
</dbReference>
<dbReference type="PRINTS" id="PR00980">
    <property type="entry name" value="TRNASYNTHALA"/>
</dbReference>
<dbReference type="SMART" id="SM00863">
    <property type="entry name" value="tRNA_SAD"/>
    <property type="match status" value="1"/>
</dbReference>
<dbReference type="SUPFAM" id="SSF55681">
    <property type="entry name" value="Class II aaRS and biotin synthetases"/>
    <property type="match status" value="1"/>
</dbReference>
<dbReference type="SUPFAM" id="SSF101353">
    <property type="entry name" value="Putative anticodon-binding domain of alanyl-tRNA synthetase (AlaRS)"/>
    <property type="match status" value="1"/>
</dbReference>
<dbReference type="SUPFAM" id="SSF55186">
    <property type="entry name" value="ThrRS/AlaRS common domain"/>
    <property type="match status" value="1"/>
</dbReference>
<dbReference type="SUPFAM" id="SSF50447">
    <property type="entry name" value="Translation proteins"/>
    <property type="match status" value="1"/>
</dbReference>
<dbReference type="PROSITE" id="PS50860">
    <property type="entry name" value="AA_TRNA_LIGASE_II_ALA"/>
    <property type="match status" value="1"/>
</dbReference>
<name>SYA_BUCBP</name>
<protein>
    <recommendedName>
        <fullName evidence="1">Alanine--tRNA ligase</fullName>
        <ecNumber evidence="1">6.1.1.7</ecNumber>
    </recommendedName>
    <alternativeName>
        <fullName evidence="1">Alanyl-tRNA synthetase</fullName>
        <shortName evidence="1">AlaRS</shortName>
    </alternativeName>
</protein>
<reference key="1">
    <citation type="journal article" date="2003" name="Proc. Natl. Acad. Sci. U.S.A.">
        <title>Reductive genome evolution in Buchnera aphidicola.</title>
        <authorList>
            <person name="van Ham R.C.H.J."/>
            <person name="Kamerbeek J."/>
            <person name="Palacios C."/>
            <person name="Rausell C."/>
            <person name="Abascal F."/>
            <person name="Bastolla U."/>
            <person name="Fernandez J.M."/>
            <person name="Jimenez L."/>
            <person name="Postigo M."/>
            <person name="Silva F.J."/>
            <person name="Tamames J."/>
            <person name="Viguera E."/>
            <person name="Latorre A."/>
            <person name="Valencia A."/>
            <person name="Moran F."/>
            <person name="Moya A."/>
        </authorList>
    </citation>
    <scope>NUCLEOTIDE SEQUENCE [LARGE SCALE GENOMIC DNA]</scope>
    <source>
        <strain>Bp</strain>
    </source>
</reference>
<sequence>MIYTSNEICQMFLNFFYKKGHTILPGSTLIPNNDPSLLFTNSGMNQFKDIFIQKNYNFKYNRVTTLQNCLRTGGKHNDFENVGYTPQHHTFFQMLGNFSFRDYFKLDAILYAWKFLTSKEQLNLSKEKLWITVYQDDLESYNIWKNIIKIDKHKIIKIGNKYNSSDSDNFWQMGEIGPCGPCTEIFYDYGNTLPGTIPGNNGCNVPRFVEIWNIVFIQFNKLSNGKLIKLTESYVDTGMGLERISAVINNVTSNYEIDLFKPLIKHILELSTVNTPKNKSIYVIADHIRACSFIISENIIPSNEKHGYVLRRIIRRAIRHGHNLGIKSLFLHKLIPTLINTMGKFNPVLKKQQNKIENVLKLEEQKFIETLEKGLKLLHKELKQIQPKHVLSGKLAFNLYDTFGFPIDLTIDICKEHNISINIMEFKRYLNQHKQNSINKNFLNTRNAYYIEDNNINIKTHFVGYQFNKTQSIINNIIIKNNKKTLQINDYQNSILFLNETPFYGESGGQIGDSGIIHNKTGKFIVNCTKMFGNIIGHVGTLASGYLNIHDTVCAEINLPKRKSIQINHTATHLLHASLRKILGKHVFQKGSFISDQSLKFDFSHNAPMNLREIQEVENIINKKIQKNISVSTTLTTLQEIQNKKVMALFQDKYKDKVRMISINDFSVELCGGTHTKYTGDIGLFKITSEISISSGIRRIEAVTGKHAISIIHHQEKTINNIANMLNSKTNNIEQTITKLLNNNIHLKKQIYTLYNQNIYNIVNSLSKHNILIKDVNIIIKNLKNENLLSLRNIVDKLKNRFKCSVIIISSIINNKSIIIVGVTRNVTDRISALDILNKLTKKLGGRGGGKNNIAEGGIKNLISLPIELKKIKTWISSRL</sequence>
<organism>
    <name type="scientific">Buchnera aphidicola subsp. Baizongia pistaciae (strain Bp)</name>
    <dbReference type="NCBI Taxonomy" id="224915"/>
    <lineage>
        <taxon>Bacteria</taxon>
        <taxon>Pseudomonadati</taxon>
        <taxon>Pseudomonadota</taxon>
        <taxon>Gammaproteobacteria</taxon>
        <taxon>Enterobacterales</taxon>
        <taxon>Erwiniaceae</taxon>
        <taxon>Buchnera</taxon>
    </lineage>
</organism>
<keyword id="KW-0030">Aminoacyl-tRNA synthetase</keyword>
<keyword id="KW-0067">ATP-binding</keyword>
<keyword id="KW-0963">Cytoplasm</keyword>
<keyword id="KW-0436">Ligase</keyword>
<keyword id="KW-0479">Metal-binding</keyword>
<keyword id="KW-0547">Nucleotide-binding</keyword>
<keyword id="KW-0648">Protein biosynthesis</keyword>
<keyword id="KW-1185">Reference proteome</keyword>
<keyword id="KW-0694">RNA-binding</keyword>
<keyword id="KW-0820">tRNA-binding</keyword>
<keyword id="KW-0862">Zinc</keyword>
<feature type="chain" id="PRO_0000075079" description="Alanine--tRNA ligase">
    <location>
        <begin position="1"/>
        <end position="880"/>
    </location>
</feature>
<feature type="binding site" evidence="1">
    <location>
        <position position="569"/>
    </location>
    <ligand>
        <name>Zn(2+)</name>
        <dbReference type="ChEBI" id="CHEBI:29105"/>
    </ligand>
</feature>
<feature type="binding site" evidence="1">
    <location>
        <position position="573"/>
    </location>
    <ligand>
        <name>Zn(2+)</name>
        <dbReference type="ChEBI" id="CHEBI:29105"/>
    </ligand>
</feature>
<feature type="binding site" evidence="1">
    <location>
        <position position="671"/>
    </location>
    <ligand>
        <name>Zn(2+)</name>
        <dbReference type="ChEBI" id="CHEBI:29105"/>
    </ligand>
</feature>
<feature type="binding site" evidence="1">
    <location>
        <position position="675"/>
    </location>
    <ligand>
        <name>Zn(2+)</name>
        <dbReference type="ChEBI" id="CHEBI:29105"/>
    </ligand>
</feature>
<comment type="function">
    <text evidence="1">Catalyzes the attachment of alanine to tRNA(Ala) in a two-step reaction: alanine is first activated by ATP to form Ala-AMP and then transferred to the acceptor end of tRNA(Ala). Also edits incorrectly charged Ser-tRNA(Ala) and Gly-tRNA(Ala) via its editing domain.</text>
</comment>
<comment type="catalytic activity">
    <reaction evidence="1">
        <text>tRNA(Ala) + L-alanine + ATP = L-alanyl-tRNA(Ala) + AMP + diphosphate</text>
        <dbReference type="Rhea" id="RHEA:12540"/>
        <dbReference type="Rhea" id="RHEA-COMP:9657"/>
        <dbReference type="Rhea" id="RHEA-COMP:9923"/>
        <dbReference type="ChEBI" id="CHEBI:30616"/>
        <dbReference type="ChEBI" id="CHEBI:33019"/>
        <dbReference type="ChEBI" id="CHEBI:57972"/>
        <dbReference type="ChEBI" id="CHEBI:78442"/>
        <dbReference type="ChEBI" id="CHEBI:78497"/>
        <dbReference type="ChEBI" id="CHEBI:456215"/>
        <dbReference type="EC" id="6.1.1.7"/>
    </reaction>
</comment>
<comment type="cofactor">
    <cofactor evidence="1">
        <name>Zn(2+)</name>
        <dbReference type="ChEBI" id="CHEBI:29105"/>
    </cofactor>
    <text evidence="1">Binds 1 zinc ion per subunit.</text>
</comment>
<comment type="subunit">
    <text evidence="1">Homotetramer.</text>
</comment>
<comment type="subcellular location">
    <subcellularLocation>
        <location evidence="1">Cytoplasm</location>
    </subcellularLocation>
</comment>
<comment type="domain">
    <text evidence="1">Consists of three domains; the N-terminal catalytic domain, the editing domain and the C-terminal C-Ala domain. The editing domain removes incorrectly charged amino acids, while the C-Ala domain, along with tRNA(Ala), serves as a bridge to cooperatively bring together the editing and aminoacylation centers thus stimulating deacylation of misacylated tRNAs.</text>
</comment>
<comment type="similarity">
    <text evidence="1">Belongs to the class-II aminoacyl-tRNA synthetase family.</text>
</comment>
<accession>P59420</accession>
<gene>
    <name evidence="1" type="primary">alaS</name>
    <name type="ordered locus">bbp_364</name>
</gene>
<proteinExistence type="inferred from homology"/>
<evidence type="ECO:0000255" key="1">
    <source>
        <dbReference type="HAMAP-Rule" id="MF_00036"/>
    </source>
</evidence>